<evidence type="ECO:0000255" key="1">
    <source>
        <dbReference type="HAMAP-Rule" id="MF_00453"/>
    </source>
</evidence>
<organism>
    <name type="scientific">Amoebophilus asiaticus (strain 5a2)</name>
    <dbReference type="NCBI Taxonomy" id="452471"/>
    <lineage>
        <taxon>Bacteria</taxon>
        <taxon>Pseudomonadati</taxon>
        <taxon>Bacteroidota</taxon>
        <taxon>Cytophagia</taxon>
        <taxon>Cytophagales</taxon>
        <taxon>Amoebophilaceae</taxon>
        <taxon>Candidatus Amoebophilus</taxon>
    </lineage>
</organism>
<dbReference type="EC" id="4.1.1.49" evidence="1"/>
<dbReference type="EMBL" id="CP001102">
    <property type="protein sequence ID" value="ACE06397.1"/>
    <property type="molecule type" value="Genomic_DNA"/>
</dbReference>
<dbReference type="RefSeq" id="WP_012473158.1">
    <property type="nucleotide sequence ID" value="NC_010830.1"/>
</dbReference>
<dbReference type="SMR" id="B3ET45"/>
<dbReference type="STRING" id="452471.Aasi_1049"/>
<dbReference type="KEGG" id="aas:Aasi_1049"/>
<dbReference type="eggNOG" id="COG1866">
    <property type="taxonomic scope" value="Bacteria"/>
</dbReference>
<dbReference type="HOGENOM" id="CLU_018247_0_1_10"/>
<dbReference type="OrthoDB" id="9806325at2"/>
<dbReference type="UniPathway" id="UPA00138"/>
<dbReference type="Proteomes" id="UP000001227">
    <property type="component" value="Chromosome"/>
</dbReference>
<dbReference type="GO" id="GO:0005829">
    <property type="term" value="C:cytosol"/>
    <property type="evidence" value="ECO:0007669"/>
    <property type="project" value="TreeGrafter"/>
</dbReference>
<dbReference type="GO" id="GO:0005524">
    <property type="term" value="F:ATP binding"/>
    <property type="evidence" value="ECO:0007669"/>
    <property type="project" value="UniProtKB-UniRule"/>
</dbReference>
<dbReference type="GO" id="GO:0046872">
    <property type="term" value="F:metal ion binding"/>
    <property type="evidence" value="ECO:0007669"/>
    <property type="project" value="UniProtKB-KW"/>
</dbReference>
<dbReference type="GO" id="GO:0004612">
    <property type="term" value="F:phosphoenolpyruvate carboxykinase (ATP) activity"/>
    <property type="evidence" value="ECO:0007669"/>
    <property type="project" value="UniProtKB-UniRule"/>
</dbReference>
<dbReference type="GO" id="GO:0006094">
    <property type="term" value="P:gluconeogenesis"/>
    <property type="evidence" value="ECO:0007669"/>
    <property type="project" value="UniProtKB-UniRule"/>
</dbReference>
<dbReference type="Gene3D" id="3.90.228.20">
    <property type="match status" value="1"/>
</dbReference>
<dbReference type="Gene3D" id="3.40.449.10">
    <property type="entry name" value="Phosphoenolpyruvate Carboxykinase, domain 1"/>
    <property type="match status" value="1"/>
</dbReference>
<dbReference type="Gene3D" id="2.170.8.10">
    <property type="entry name" value="Phosphoenolpyruvate Carboxykinase, domain 2"/>
    <property type="match status" value="1"/>
</dbReference>
<dbReference type="HAMAP" id="MF_00453">
    <property type="entry name" value="PEPCK_ATP"/>
    <property type="match status" value="1"/>
</dbReference>
<dbReference type="InterPro" id="IPR001272">
    <property type="entry name" value="PEP_carboxykinase_ATP"/>
</dbReference>
<dbReference type="InterPro" id="IPR013035">
    <property type="entry name" value="PEP_carboxykinase_C"/>
</dbReference>
<dbReference type="InterPro" id="IPR008210">
    <property type="entry name" value="PEP_carboxykinase_N"/>
</dbReference>
<dbReference type="InterPro" id="IPR015994">
    <property type="entry name" value="PEPCK_ATP_CS"/>
</dbReference>
<dbReference type="NCBIfam" id="TIGR00224">
    <property type="entry name" value="pckA"/>
    <property type="match status" value="1"/>
</dbReference>
<dbReference type="NCBIfam" id="NF006820">
    <property type="entry name" value="PRK09344.1-2"/>
    <property type="match status" value="1"/>
</dbReference>
<dbReference type="NCBIfam" id="NF006821">
    <property type="entry name" value="PRK09344.1-3"/>
    <property type="match status" value="1"/>
</dbReference>
<dbReference type="PANTHER" id="PTHR30031:SF0">
    <property type="entry name" value="PHOSPHOENOLPYRUVATE CARBOXYKINASE (ATP)"/>
    <property type="match status" value="1"/>
</dbReference>
<dbReference type="PANTHER" id="PTHR30031">
    <property type="entry name" value="PHOSPHOENOLPYRUVATE CARBOXYKINASE ATP"/>
    <property type="match status" value="1"/>
</dbReference>
<dbReference type="Pfam" id="PF01293">
    <property type="entry name" value="PEPCK_ATP"/>
    <property type="match status" value="1"/>
</dbReference>
<dbReference type="PIRSF" id="PIRSF006294">
    <property type="entry name" value="PEP_crbxkin"/>
    <property type="match status" value="1"/>
</dbReference>
<dbReference type="SUPFAM" id="SSF68923">
    <property type="entry name" value="PEP carboxykinase N-terminal domain"/>
    <property type="match status" value="1"/>
</dbReference>
<dbReference type="SUPFAM" id="SSF53795">
    <property type="entry name" value="PEP carboxykinase-like"/>
    <property type="match status" value="1"/>
</dbReference>
<dbReference type="PROSITE" id="PS00532">
    <property type="entry name" value="PEPCK_ATP"/>
    <property type="match status" value="1"/>
</dbReference>
<proteinExistence type="inferred from homology"/>
<reference key="1">
    <citation type="journal article" date="2010" name="J. Bacteriol.">
        <title>The genome of the amoeba symbiont 'Candidatus Amoebophilus asiaticus' reveals common mechanisms for host cell interaction among amoeba-associated bacteria.</title>
        <authorList>
            <person name="Schmitz-Esser S."/>
            <person name="Tischler P."/>
            <person name="Arnold R."/>
            <person name="Montanaro J."/>
            <person name="Wagner M."/>
            <person name="Rattei T."/>
            <person name="Horn M."/>
        </authorList>
    </citation>
    <scope>NUCLEOTIDE SEQUENCE [LARGE SCALE GENOMIC DNA]</scope>
    <source>
        <strain>5a2</strain>
    </source>
</reference>
<gene>
    <name evidence="1" type="primary">pckA</name>
    <name type="ordered locus">Aasi_1049</name>
</gene>
<feature type="chain" id="PRO_1000192307" description="Phosphoenolpyruvate carboxykinase (ATP)">
    <location>
        <begin position="1"/>
        <end position="520"/>
    </location>
</feature>
<feature type="binding site" evidence="1">
    <location>
        <position position="61"/>
    </location>
    <ligand>
        <name>substrate</name>
    </ligand>
</feature>
<feature type="binding site" evidence="1">
    <location>
        <position position="196"/>
    </location>
    <ligand>
        <name>substrate</name>
    </ligand>
</feature>
<feature type="binding site" evidence="1">
    <location>
        <position position="202"/>
    </location>
    <ligand>
        <name>ATP</name>
        <dbReference type="ChEBI" id="CHEBI:30616"/>
    </ligand>
</feature>
<feature type="binding site" evidence="1">
    <location>
        <position position="202"/>
    </location>
    <ligand>
        <name>Mn(2+)</name>
        <dbReference type="ChEBI" id="CHEBI:29035"/>
    </ligand>
</feature>
<feature type="binding site" evidence="1">
    <location>
        <position position="202"/>
    </location>
    <ligand>
        <name>substrate</name>
    </ligand>
</feature>
<feature type="binding site" evidence="1">
    <location>
        <position position="222"/>
    </location>
    <ligand>
        <name>ATP</name>
        <dbReference type="ChEBI" id="CHEBI:30616"/>
    </ligand>
</feature>
<feature type="binding site" evidence="1">
    <location>
        <position position="222"/>
    </location>
    <ligand>
        <name>Mn(2+)</name>
        <dbReference type="ChEBI" id="CHEBI:29035"/>
    </ligand>
</feature>
<feature type="binding site" evidence="1">
    <location>
        <begin position="238"/>
        <end position="246"/>
    </location>
    <ligand>
        <name>ATP</name>
        <dbReference type="ChEBI" id="CHEBI:30616"/>
    </ligand>
</feature>
<feature type="binding site" evidence="1">
    <location>
        <position position="259"/>
    </location>
    <ligand>
        <name>Mn(2+)</name>
        <dbReference type="ChEBI" id="CHEBI:29035"/>
    </ligand>
</feature>
<feature type="binding site" evidence="1">
    <location>
        <position position="287"/>
    </location>
    <ligand>
        <name>ATP</name>
        <dbReference type="ChEBI" id="CHEBI:30616"/>
    </ligand>
</feature>
<feature type="binding site" evidence="1">
    <location>
        <position position="324"/>
    </location>
    <ligand>
        <name>ATP</name>
        <dbReference type="ChEBI" id="CHEBI:30616"/>
    </ligand>
</feature>
<feature type="binding site" evidence="1">
    <location>
        <position position="324"/>
    </location>
    <ligand>
        <name>substrate</name>
    </ligand>
</feature>
<feature type="binding site" evidence="1">
    <location>
        <begin position="443"/>
        <end position="444"/>
    </location>
    <ligand>
        <name>ATP</name>
        <dbReference type="ChEBI" id="CHEBI:30616"/>
    </ligand>
</feature>
<feature type="binding site" evidence="1">
    <location>
        <position position="449"/>
    </location>
    <ligand>
        <name>ATP</name>
        <dbReference type="ChEBI" id="CHEBI:30616"/>
    </ligand>
</feature>
<keyword id="KW-0067">ATP-binding</keyword>
<keyword id="KW-0963">Cytoplasm</keyword>
<keyword id="KW-0210">Decarboxylase</keyword>
<keyword id="KW-0312">Gluconeogenesis</keyword>
<keyword id="KW-0456">Lyase</keyword>
<keyword id="KW-0464">Manganese</keyword>
<keyword id="KW-0479">Metal-binding</keyword>
<keyword id="KW-0547">Nucleotide-binding</keyword>
<keyword id="KW-1185">Reference proteome</keyword>
<name>PCKA_AMOA5</name>
<accession>B3ET45</accession>
<sequence length="520" mass="57653">MHVLSNPKHVTWLTQMGLDQIGEAYWQLGVPELVEHAIHNSEGVLSAEGALVCSTGKFTGRSPQDKFIVEDEKTRDTIWWGPVNNPFDSKQFDALYEKVTQFLQGKRVYIRDGYASALPEYKLNLRTVTTQSWTNLFVNNLFLRPIDKELTKFSPDFLILQVPEFQADPHVDGTKNANFTIINFTKRVILIGGTGFAGEIKKAVFTVLNYLLPQEHQVLPMHCSANVGTDGNTAIYFGLSGTGKTTLSADPNRKLIGDDEHGWCDKGIFNFEGGCYAKTINLAKESEPQIFDAIKFGTIVENMRFFAGTRTIDYKDSSITENVRCAYPLEYIPGALIPSIGSIPKHIFFLSCDAYGVLPPISQLDKDQAIHYFLSGYTAKIAGTEAGISAPKAVFSACFGAPFLPLHPTRYATMLADKLEKYEVTVWLVNTGWIGGGYGIGKRIDLNYTRAMVTAALSGELAKAGFEKDAIFNLSIPNACPEVPTHILNPSNTWNSVKEYELEAHKLMEAFASNFALYCD</sequence>
<protein>
    <recommendedName>
        <fullName evidence="1">Phosphoenolpyruvate carboxykinase (ATP)</fullName>
        <shortName evidence="1">PCK</shortName>
        <shortName evidence="1">PEP carboxykinase</shortName>
        <shortName evidence="1">PEPCK</shortName>
        <ecNumber evidence="1">4.1.1.49</ecNumber>
    </recommendedName>
</protein>
<comment type="function">
    <text evidence="1">Involved in the gluconeogenesis. Catalyzes the conversion of oxaloacetate (OAA) to phosphoenolpyruvate (PEP) through direct phosphoryl transfer between the nucleoside triphosphate and OAA.</text>
</comment>
<comment type="catalytic activity">
    <reaction evidence="1">
        <text>oxaloacetate + ATP = phosphoenolpyruvate + ADP + CO2</text>
        <dbReference type="Rhea" id="RHEA:18617"/>
        <dbReference type="ChEBI" id="CHEBI:16452"/>
        <dbReference type="ChEBI" id="CHEBI:16526"/>
        <dbReference type="ChEBI" id="CHEBI:30616"/>
        <dbReference type="ChEBI" id="CHEBI:58702"/>
        <dbReference type="ChEBI" id="CHEBI:456216"/>
        <dbReference type="EC" id="4.1.1.49"/>
    </reaction>
</comment>
<comment type="cofactor">
    <cofactor evidence="1">
        <name>Mn(2+)</name>
        <dbReference type="ChEBI" id="CHEBI:29035"/>
    </cofactor>
    <text evidence="1">Binds 1 Mn(2+) ion per subunit.</text>
</comment>
<comment type="pathway">
    <text evidence="1">Carbohydrate biosynthesis; gluconeogenesis.</text>
</comment>
<comment type="subcellular location">
    <subcellularLocation>
        <location evidence="1">Cytoplasm</location>
    </subcellularLocation>
</comment>
<comment type="similarity">
    <text evidence="1">Belongs to the phosphoenolpyruvate carboxykinase (ATP) family.</text>
</comment>